<evidence type="ECO:0000255" key="1">
    <source>
        <dbReference type="HAMAP-Rule" id="MF_00379"/>
    </source>
</evidence>
<feature type="chain" id="PRO_0000188886" description="tRNA modification GTPase MnmE">
    <location>
        <begin position="1"/>
        <end position="456"/>
    </location>
</feature>
<feature type="domain" description="TrmE-type G">
    <location>
        <begin position="220"/>
        <end position="379"/>
    </location>
</feature>
<feature type="binding site" evidence="1">
    <location>
        <position position="21"/>
    </location>
    <ligand>
        <name>(6S)-5-formyl-5,6,7,8-tetrahydrofolate</name>
        <dbReference type="ChEBI" id="CHEBI:57457"/>
    </ligand>
</feature>
<feature type="binding site" evidence="1">
    <location>
        <position position="85"/>
    </location>
    <ligand>
        <name>(6S)-5-formyl-5,6,7,8-tetrahydrofolate</name>
        <dbReference type="ChEBI" id="CHEBI:57457"/>
    </ligand>
</feature>
<feature type="binding site" evidence="1">
    <location>
        <position position="124"/>
    </location>
    <ligand>
        <name>(6S)-5-formyl-5,6,7,8-tetrahydrofolate</name>
        <dbReference type="ChEBI" id="CHEBI:57457"/>
    </ligand>
</feature>
<feature type="binding site" evidence="1">
    <location>
        <begin position="230"/>
        <end position="235"/>
    </location>
    <ligand>
        <name>GTP</name>
        <dbReference type="ChEBI" id="CHEBI:37565"/>
    </ligand>
</feature>
<feature type="binding site" evidence="1">
    <location>
        <position position="230"/>
    </location>
    <ligand>
        <name>K(+)</name>
        <dbReference type="ChEBI" id="CHEBI:29103"/>
    </ligand>
</feature>
<feature type="binding site" evidence="1">
    <location>
        <position position="234"/>
    </location>
    <ligand>
        <name>Mg(2+)</name>
        <dbReference type="ChEBI" id="CHEBI:18420"/>
    </ligand>
</feature>
<feature type="binding site" evidence="1">
    <location>
        <begin position="249"/>
        <end position="255"/>
    </location>
    <ligand>
        <name>GTP</name>
        <dbReference type="ChEBI" id="CHEBI:37565"/>
    </ligand>
</feature>
<feature type="binding site" evidence="1">
    <location>
        <position position="249"/>
    </location>
    <ligand>
        <name>K(+)</name>
        <dbReference type="ChEBI" id="CHEBI:29103"/>
    </ligand>
</feature>
<feature type="binding site" evidence="1">
    <location>
        <position position="251"/>
    </location>
    <ligand>
        <name>K(+)</name>
        <dbReference type="ChEBI" id="CHEBI:29103"/>
    </ligand>
</feature>
<feature type="binding site" evidence="1">
    <location>
        <position position="254"/>
    </location>
    <ligand>
        <name>K(+)</name>
        <dbReference type="ChEBI" id="CHEBI:29103"/>
    </ligand>
</feature>
<feature type="binding site" evidence="1">
    <location>
        <position position="255"/>
    </location>
    <ligand>
        <name>Mg(2+)</name>
        <dbReference type="ChEBI" id="CHEBI:18420"/>
    </ligand>
</feature>
<feature type="binding site" evidence="1">
    <location>
        <begin position="274"/>
        <end position="277"/>
    </location>
    <ligand>
        <name>GTP</name>
        <dbReference type="ChEBI" id="CHEBI:37565"/>
    </ligand>
</feature>
<feature type="binding site" evidence="1">
    <location>
        <position position="456"/>
    </location>
    <ligand>
        <name>(6S)-5-formyl-5,6,7,8-tetrahydrofolate</name>
        <dbReference type="ChEBI" id="CHEBI:57457"/>
    </ligand>
</feature>
<dbReference type="EC" id="3.6.-.-" evidence="1"/>
<dbReference type="EMBL" id="AE016823">
    <property type="protein sequence ID" value="AAS68788.1"/>
    <property type="molecule type" value="Genomic_DNA"/>
</dbReference>
<dbReference type="RefSeq" id="WP_001000160.1">
    <property type="nucleotide sequence ID" value="NC_005823.1"/>
</dbReference>
<dbReference type="SMR" id="Q72VY6"/>
<dbReference type="GeneID" id="61143513"/>
<dbReference type="KEGG" id="lic:LIC_10159"/>
<dbReference type="HOGENOM" id="CLU_019624_4_1_12"/>
<dbReference type="Proteomes" id="UP000007037">
    <property type="component" value="Chromosome I"/>
</dbReference>
<dbReference type="GO" id="GO:0005829">
    <property type="term" value="C:cytosol"/>
    <property type="evidence" value="ECO:0007669"/>
    <property type="project" value="TreeGrafter"/>
</dbReference>
<dbReference type="GO" id="GO:0005525">
    <property type="term" value="F:GTP binding"/>
    <property type="evidence" value="ECO:0007669"/>
    <property type="project" value="UniProtKB-UniRule"/>
</dbReference>
<dbReference type="GO" id="GO:0003924">
    <property type="term" value="F:GTPase activity"/>
    <property type="evidence" value="ECO:0007669"/>
    <property type="project" value="UniProtKB-UniRule"/>
</dbReference>
<dbReference type="GO" id="GO:0046872">
    <property type="term" value="F:metal ion binding"/>
    <property type="evidence" value="ECO:0007669"/>
    <property type="project" value="UniProtKB-KW"/>
</dbReference>
<dbReference type="GO" id="GO:0030488">
    <property type="term" value="P:tRNA methylation"/>
    <property type="evidence" value="ECO:0007669"/>
    <property type="project" value="TreeGrafter"/>
</dbReference>
<dbReference type="GO" id="GO:0002098">
    <property type="term" value="P:tRNA wobble uridine modification"/>
    <property type="evidence" value="ECO:0007669"/>
    <property type="project" value="TreeGrafter"/>
</dbReference>
<dbReference type="CDD" id="cd04164">
    <property type="entry name" value="trmE"/>
    <property type="match status" value="1"/>
</dbReference>
<dbReference type="CDD" id="cd14858">
    <property type="entry name" value="TrmE_N"/>
    <property type="match status" value="1"/>
</dbReference>
<dbReference type="FunFam" id="3.40.50.300:FF:001376">
    <property type="entry name" value="tRNA modification GTPase MnmE"/>
    <property type="match status" value="1"/>
</dbReference>
<dbReference type="Gene3D" id="3.40.50.300">
    <property type="entry name" value="P-loop containing nucleotide triphosphate hydrolases"/>
    <property type="match status" value="1"/>
</dbReference>
<dbReference type="Gene3D" id="3.30.1360.120">
    <property type="entry name" value="Probable tRNA modification gtpase trme, domain 1"/>
    <property type="match status" value="1"/>
</dbReference>
<dbReference type="Gene3D" id="1.20.120.430">
    <property type="entry name" value="tRNA modification GTPase MnmE domain 2"/>
    <property type="match status" value="1"/>
</dbReference>
<dbReference type="HAMAP" id="MF_00379">
    <property type="entry name" value="GTPase_MnmE"/>
    <property type="match status" value="1"/>
</dbReference>
<dbReference type="InterPro" id="IPR031168">
    <property type="entry name" value="G_TrmE"/>
</dbReference>
<dbReference type="InterPro" id="IPR006073">
    <property type="entry name" value="GTP-bd"/>
</dbReference>
<dbReference type="InterPro" id="IPR018948">
    <property type="entry name" value="GTP-bd_TrmE_N"/>
</dbReference>
<dbReference type="InterPro" id="IPR004520">
    <property type="entry name" value="GTPase_MnmE"/>
</dbReference>
<dbReference type="InterPro" id="IPR027368">
    <property type="entry name" value="MnmE_dom2"/>
</dbReference>
<dbReference type="InterPro" id="IPR025867">
    <property type="entry name" value="MnmE_helical"/>
</dbReference>
<dbReference type="InterPro" id="IPR027417">
    <property type="entry name" value="P-loop_NTPase"/>
</dbReference>
<dbReference type="InterPro" id="IPR005225">
    <property type="entry name" value="Small_GTP-bd"/>
</dbReference>
<dbReference type="InterPro" id="IPR027266">
    <property type="entry name" value="TrmE/GcvT_dom1"/>
</dbReference>
<dbReference type="NCBIfam" id="TIGR00450">
    <property type="entry name" value="mnmE_trmE_thdF"/>
    <property type="match status" value="1"/>
</dbReference>
<dbReference type="NCBIfam" id="TIGR00231">
    <property type="entry name" value="small_GTP"/>
    <property type="match status" value="1"/>
</dbReference>
<dbReference type="PANTHER" id="PTHR42714">
    <property type="entry name" value="TRNA MODIFICATION GTPASE GTPBP3"/>
    <property type="match status" value="1"/>
</dbReference>
<dbReference type="PANTHER" id="PTHR42714:SF2">
    <property type="entry name" value="TRNA MODIFICATION GTPASE GTPBP3, MITOCHONDRIAL"/>
    <property type="match status" value="1"/>
</dbReference>
<dbReference type="Pfam" id="PF01926">
    <property type="entry name" value="MMR_HSR1"/>
    <property type="match status" value="1"/>
</dbReference>
<dbReference type="Pfam" id="PF12631">
    <property type="entry name" value="MnmE_helical"/>
    <property type="match status" value="1"/>
</dbReference>
<dbReference type="Pfam" id="PF10396">
    <property type="entry name" value="TrmE_N"/>
    <property type="match status" value="1"/>
</dbReference>
<dbReference type="SUPFAM" id="SSF52540">
    <property type="entry name" value="P-loop containing nucleoside triphosphate hydrolases"/>
    <property type="match status" value="1"/>
</dbReference>
<dbReference type="PROSITE" id="PS51709">
    <property type="entry name" value="G_TRME"/>
    <property type="match status" value="1"/>
</dbReference>
<protein>
    <recommendedName>
        <fullName evidence="1">tRNA modification GTPase MnmE</fullName>
        <ecNumber evidence="1">3.6.-.-</ecNumber>
    </recommendedName>
</protein>
<name>MNME_LEPIC</name>
<accession>Q72VY6</accession>
<reference key="1">
    <citation type="journal article" date="2004" name="J. Bacteriol.">
        <title>Comparative genomics of two Leptospira interrogans serovars reveals novel insights into physiology and pathogenesis.</title>
        <authorList>
            <person name="Nascimento A.L.T.O."/>
            <person name="Ko A.I."/>
            <person name="Martins E.A.L."/>
            <person name="Monteiro-Vitorello C.B."/>
            <person name="Ho P.L."/>
            <person name="Haake D.A."/>
            <person name="Verjovski-Almeida S."/>
            <person name="Hartskeerl R.A."/>
            <person name="Marques M.V."/>
            <person name="Oliveira M.C."/>
            <person name="Menck C.F.M."/>
            <person name="Leite L.C.C."/>
            <person name="Carrer H."/>
            <person name="Coutinho L.L."/>
            <person name="Degrave W.M."/>
            <person name="Dellagostin O.A."/>
            <person name="El-Dorry H."/>
            <person name="Ferro E.S."/>
            <person name="Ferro M.I.T."/>
            <person name="Furlan L.R."/>
            <person name="Gamberini M."/>
            <person name="Giglioti E.A."/>
            <person name="Goes-Neto A."/>
            <person name="Goldman G.H."/>
            <person name="Goldman M.H.S."/>
            <person name="Harakava R."/>
            <person name="Jeronimo S.M.B."/>
            <person name="Junqueira-de-Azevedo I.L.M."/>
            <person name="Kimura E.T."/>
            <person name="Kuramae E.E."/>
            <person name="Lemos E.G.M."/>
            <person name="Lemos M.V.F."/>
            <person name="Marino C.L."/>
            <person name="Nunes L.R."/>
            <person name="de Oliveira R.C."/>
            <person name="Pereira G.G."/>
            <person name="Reis M.S."/>
            <person name="Schriefer A."/>
            <person name="Siqueira W.J."/>
            <person name="Sommer P."/>
            <person name="Tsai S.M."/>
            <person name="Simpson A.J.G."/>
            <person name="Ferro J.A."/>
            <person name="Camargo L.E.A."/>
            <person name="Kitajima J.P."/>
            <person name="Setubal J.C."/>
            <person name="Van Sluys M.A."/>
        </authorList>
    </citation>
    <scope>NUCLEOTIDE SEQUENCE [LARGE SCALE GENOMIC DNA]</scope>
    <source>
        <strain>Fiocruz L1-130</strain>
    </source>
</reference>
<proteinExistence type="inferred from homology"/>
<comment type="function">
    <text evidence="1">Exhibits a very high intrinsic GTPase hydrolysis rate. Involved in the addition of a carboxymethylaminomethyl (cmnm) group at the wobble position (U34) of certain tRNAs, forming tRNA-cmnm(5)s(2)U34.</text>
</comment>
<comment type="cofactor">
    <cofactor evidence="1">
        <name>K(+)</name>
        <dbReference type="ChEBI" id="CHEBI:29103"/>
    </cofactor>
    <text evidence="1">Binds 1 potassium ion per subunit.</text>
</comment>
<comment type="subunit">
    <text evidence="1">Homodimer. Heterotetramer of two MnmE and two MnmG subunits.</text>
</comment>
<comment type="subcellular location">
    <subcellularLocation>
        <location evidence="1">Cytoplasm</location>
    </subcellularLocation>
</comment>
<comment type="similarity">
    <text evidence="1">Belongs to the TRAFAC class TrmE-Era-EngA-EngB-Septin-like GTPase superfamily. TrmE GTPase family.</text>
</comment>
<organism>
    <name type="scientific">Leptospira interrogans serogroup Icterohaemorrhagiae serovar copenhageni (strain Fiocruz L1-130)</name>
    <dbReference type="NCBI Taxonomy" id="267671"/>
    <lineage>
        <taxon>Bacteria</taxon>
        <taxon>Pseudomonadati</taxon>
        <taxon>Spirochaetota</taxon>
        <taxon>Spirochaetia</taxon>
        <taxon>Leptospirales</taxon>
        <taxon>Leptospiraceae</taxon>
        <taxon>Leptospira</taxon>
    </lineage>
</organism>
<gene>
    <name evidence="1" type="primary">mnmE</name>
    <name evidence="1" type="synonym">trmE</name>
    <name type="ordered locus">LIC_10159</name>
</gene>
<keyword id="KW-0963">Cytoplasm</keyword>
<keyword id="KW-0342">GTP-binding</keyword>
<keyword id="KW-0378">Hydrolase</keyword>
<keyword id="KW-0460">Magnesium</keyword>
<keyword id="KW-0479">Metal-binding</keyword>
<keyword id="KW-0547">Nucleotide-binding</keyword>
<keyword id="KW-0630">Potassium</keyword>
<keyword id="KW-0819">tRNA processing</keyword>
<sequence length="456" mass="51534">MNDTIAAVSTSSGAGAIGIIRMSGPEALTISSSFLFSKNKFLSPSEILPRTAIQCVFQIGDRKIDQILFFYFKSPNSYTGEDLCEFHFHGNPILLREALDAIFRAGARPAKQGEFSRRAFLNEKLDLTEVEAIGRLISARSRFELELAQKNVFGEVTRFTSNLRSQLISLKAECEAEIDFSTEDLTYESLEERKTRIENVKSLCQTLISKSSSAEKLIQQFRIVLYGEPNTGKSSLMNVLLGKERSIISEIPGTTRDYISEEIFLEGIPVRLVDTAGVRETTDHIEKLGIERSEKEFQSADVRLFLVDVSKKENWKEFINKSRERLEGSILIANKIDILNSSWDRNLFSDVKDLIVLEISCKTKEGISNLLDAIKERTGKLGHSEDYVLLEERQRYHFETIVRCLDKTLHLLKEGAPAEIYIQEINYALAEIGEVNGKVDTEEVLGRIFSKFCVGK</sequence>